<organism>
    <name type="scientific">Medicago truncatula</name>
    <name type="common">Barrel medic</name>
    <name type="synonym">Medicago tribuloides</name>
    <dbReference type="NCBI Taxonomy" id="3880"/>
    <lineage>
        <taxon>Eukaryota</taxon>
        <taxon>Viridiplantae</taxon>
        <taxon>Streptophyta</taxon>
        <taxon>Embryophyta</taxon>
        <taxon>Tracheophyta</taxon>
        <taxon>Spermatophyta</taxon>
        <taxon>Magnoliopsida</taxon>
        <taxon>eudicotyledons</taxon>
        <taxon>Gunneridae</taxon>
        <taxon>Pentapetalae</taxon>
        <taxon>rosids</taxon>
        <taxon>fabids</taxon>
        <taxon>Fabales</taxon>
        <taxon>Fabaceae</taxon>
        <taxon>Papilionoideae</taxon>
        <taxon>50 kb inversion clade</taxon>
        <taxon>NPAAA clade</taxon>
        <taxon>Hologalegina</taxon>
        <taxon>IRL clade</taxon>
        <taxon>Trifolieae</taxon>
        <taxon>Medicago</taxon>
    </lineage>
</organism>
<dbReference type="EMBL" id="AF106930">
    <property type="protein sequence ID" value="AAD39891.1"/>
    <property type="molecule type" value="mRNA"/>
</dbReference>
<dbReference type="PIR" id="T50774">
    <property type="entry name" value="T50774"/>
</dbReference>
<dbReference type="RefSeq" id="XP_003589347.2">
    <property type="nucleotide sequence ID" value="XM_003589299.2"/>
</dbReference>
<dbReference type="SMR" id="Q9XHM1"/>
<dbReference type="iPTMnet" id="Q9XHM1"/>
<dbReference type="PaxDb" id="3880-AES59598"/>
<dbReference type="EnsemblPlants" id="rna993">
    <property type="protein sequence ID" value="RHN77529.1"/>
    <property type="gene ID" value="gene993"/>
</dbReference>
<dbReference type="GeneID" id="11419223"/>
<dbReference type="Gramene" id="rna993">
    <property type="protein sequence ID" value="RHN77529.1"/>
    <property type="gene ID" value="gene993"/>
</dbReference>
<dbReference type="KEGG" id="mtr:11419223"/>
<dbReference type="eggNOG" id="KOG1075">
    <property type="taxonomic scope" value="Eukaryota"/>
</dbReference>
<dbReference type="eggNOG" id="KOG1076">
    <property type="taxonomic scope" value="Eukaryota"/>
</dbReference>
<dbReference type="OrthoDB" id="29647at2759"/>
<dbReference type="ExpressionAtlas" id="Q9XHM1">
    <property type="expression patterns" value="differential"/>
</dbReference>
<dbReference type="GO" id="GO:0016282">
    <property type="term" value="C:eukaryotic 43S preinitiation complex"/>
    <property type="evidence" value="ECO:0007669"/>
    <property type="project" value="UniProtKB-UniRule"/>
</dbReference>
<dbReference type="GO" id="GO:0033290">
    <property type="term" value="C:eukaryotic 48S preinitiation complex"/>
    <property type="evidence" value="ECO:0007669"/>
    <property type="project" value="UniProtKB-UniRule"/>
</dbReference>
<dbReference type="GO" id="GO:0005852">
    <property type="term" value="C:eukaryotic translation initiation factor 3 complex"/>
    <property type="evidence" value="ECO:0007669"/>
    <property type="project" value="UniProtKB-UniRule"/>
</dbReference>
<dbReference type="GO" id="GO:0008168">
    <property type="term" value="F:methyltransferase activity"/>
    <property type="evidence" value="ECO:0007669"/>
    <property type="project" value="UniProtKB-ARBA"/>
</dbReference>
<dbReference type="GO" id="GO:0003723">
    <property type="term" value="F:RNA binding"/>
    <property type="evidence" value="ECO:0007669"/>
    <property type="project" value="InterPro"/>
</dbReference>
<dbReference type="GO" id="GO:0003743">
    <property type="term" value="F:translation initiation factor activity"/>
    <property type="evidence" value="ECO:0007669"/>
    <property type="project" value="UniProtKB-UniRule"/>
</dbReference>
<dbReference type="GO" id="GO:0031369">
    <property type="term" value="F:translation initiation factor binding"/>
    <property type="evidence" value="ECO:0007669"/>
    <property type="project" value="InterPro"/>
</dbReference>
<dbReference type="GO" id="GO:0001732">
    <property type="term" value="P:formation of cytoplasmic translation initiation complex"/>
    <property type="evidence" value="ECO:0007669"/>
    <property type="project" value="UniProtKB-UniRule"/>
</dbReference>
<dbReference type="HAMAP" id="MF_03002">
    <property type="entry name" value="eIF3c"/>
    <property type="match status" value="1"/>
</dbReference>
<dbReference type="InterPro" id="IPR027516">
    <property type="entry name" value="EIF3C"/>
</dbReference>
<dbReference type="InterPro" id="IPR008905">
    <property type="entry name" value="EIF3C_N_dom"/>
</dbReference>
<dbReference type="InterPro" id="IPR000717">
    <property type="entry name" value="PCI_dom"/>
</dbReference>
<dbReference type="InterPro" id="IPR036390">
    <property type="entry name" value="WH_DNA-bd_sf"/>
</dbReference>
<dbReference type="PANTHER" id="PTHR13937">
    <property type="entry name" value="EUKARYOTIC TRANSLATION INITATION FACTOR 3, SUBUNIT 8 EIF3S8 -RELATED"/>
    <property type="match status" value="1"/>
</dbReference>
<dbReference type="PANTHER" id="PTHR13937:SF0">
    <property type="entry name" value="EUKARYOTIC TRANSLATION INITIATION FACTOR 3 SUBUNIT C-RELATED"/>
    <property type="match status" value="1"/>
</dbReference>
<dbReference type="Pfam" id="PF05470">
    <property type="entry name" value="eIF-3c_N"/>
    <property type="match status" value="1"/>
</dbReference>
<dbReference type="Pfam" id="PF01399">
    <property type="entry name" value="PCI"/>
    <property type="match status" value="1"/>
</dbReference>
<dbReference type="SMART" id="SM00088">
    <property type="entry name" value="PINT"/>
    <property type="match status" value="1"/>
</dbReference>
<dbReference type="SUPFAM" id="SSF46785">
    <property type="entry name" value="Winged helix' DNA-binding domain"/>
    <property type="match status" value="1"/>
</dbReference>
<dbReference type="PROSITE" id="PS50250">
    <property type="entry name" value="PCI"/>
    <property type="match status" value="1"/>
</dbReference>
<name>EIF3C_MEDTR</name>
<sequence>MTSRFFYQGGDQSDTDDEPTDIDDEPSDTEPAPTDPNGKSKYLAGGNADDSDDDDGQKRVVKSAKDKRFDEMASTVDQIKNAIKINDWVSLQESFDKINKQLEKVMRVIESQKIPNLYIKALVMLEDFLAQASANKDAKKKMSPSNAKAFNSMKQKLKKNNKQYEDLIIKCRESPESEGEKDEDDEDSDEYESDDEMIEPDQLRKPEPVSDSETSELGNDRPGDDGDAPWDQKLSKKDRLLEKMFMKKPSEITWDTVNKKFKEILEARGRKGTGRFEQVEQLTFLTKVAKTPAQKLQILFSVVSAQFDVNPGLSGHMPISVWKKCVQNMLVILDILVQHPNIKVDDSVELDENETKKGDDYNGPINVWGNLVAFLEKIDAEFFKSLQCIDPHTREYVERLRDEPQFVVLAQNVQEYLESIGDFKASSKVALKRVELIYYKPHEVYEATRKLAEMTVEGDNGEMSEEPKGFEDTRIPAPFVVTLELVARKPTFPENSRTLMDVLVSLIYKYGDERTKARAMLCDIYHHALLDEFAVARDLLLMSHLQENVHHMDISTQILFNRAMSQLGLCAFRAGLVSEAHGCLSELYSGGRVKELLAQGVSQSRYHEKTPEQERLERRRQMPYHMHINLELLESVHLTSAMLLEVPNMAANVHDAKRKIISKNFRRLLEVSEKQTFTGPPETVRDHVMAATRVLINGDFQKAFDIIASLDVWKFVKNRDAVLEMLKDKIKEEALRTYLFTFSSSYDSLSVVQLTNFFDLSLPRVHSIVSRMMVNEELHASWDQPTGCIIFRNVEHSRVQALAFQLTEKLSILAESNERATEARLGGGGLDLPPRRRDGQDYAAAAAGGGSGTSSGGRWQDLSYSQTRQGSGRTGYGGGRALSFSQAGGSGGYSRGRGTGGGGYQNSGRTQGGSALRGPHGDTSTRMVSLRGVRA</sequence>
<reference key="1">
    <citation type="journal article" date="1999" name="Mol. Plant Microbe Interact.">
        <title>Novel genes induced during an arbuscular mycorrhizal (AM) symbiosis formed between Medicago truncatula and Glomus versiforme.</title>
        <authorList>
            <person name="van Buuren M.L."/>
            <person name="Maldonado-Mendoza I.E."/>
            <person name="Trieu A.T."/>
            <person name="Blaylock L.A."/>
            <person name="Harrison M.J."/>
        </authorList>
    </citation>
    <scope>NUCLEOTIDE SEQUENCE [MRNA]</scope>
    <source>
        <strain>cv. Jemalong A17</strain>
    </source>
</reference>
<accession>Q9XHM1</accession>
<comment type="function">
    <text evidence="1">Component of the eukaryotic translation initiation factor 3 (eIF-3) complex, which is involved in protein synthesis of a specialized repertoire of mRNAs and, together with other initiation factors, stimulates binding of mRNA and methionyl-tRNAi to the 40S ribosome. The eIF-3 complex specifically targets and initiates translation of a subset of mRNAs involved in cell proliferation.</text>
</comment>
<comment type="subunit">
    <text evidence="1">Component of the eukaryotic translation initiation factor 3 (eIF-3) complex.</text>
</comment>
<comment type="subcellular location">
    <subcellularLocation>
        <location evidence="1">Cytoplasm</location>
    </subcellularLocation>
</comment>
<comment type="similarity">
    <text evidence="1">Belongs to the eIF-3 subunit C family.</text>
</comment>
<gene>
    <name type="primary">TIF3C1</name>
    <name type="synonym">AM3-1</name>
</gene>
<keyword id="KW-0963">Cytoplasm</keyword>
<keyword id="KW-0396">Initiation factor</keyword>
<keyword id="KW-0648">Protein biosynthesis</keyword>
<feature type="chain" id="PRO_0000123528" description="Eukaryotic translation initiation factor 3 subunit C">
    <location>
        <begin position="1"/>
        <end position="935"/>
    </location>
</feature>
<feature type="domain" description="PCI" evidence="2">
    <location>
        <begin position="624"/>
        <end position="796"/>
    </location>
</feature>
<feature type="region of interest" description="Disordered" evidence="3">
    <location>
        <begin position="1"/>
        <end position="66"/>
    </location>
</feature>
<feature type="region of interest" description="Disordered" evidence="3">
    <location>
        <begin position="135"/>
        <end position="156"/>
    </location>
</feature>
<feature type="region of interest" description="Disordered" evidence="3">
    <location>
        <begin position="171"/>
        <end position="233"/>
    </location>
</feature>
<feature type="region of interest" description="Disordered" evidence="3">
    <location>
        <begin position="823"/>
        <end position="935"/>
    </location>
</feature>
<feature type="compositionally biased region" description="Acidic residues" evidence="3">
    <location>
        <begin position="13"/>
        <end position="28"/>
    </location>
</feature>
<feature type="compositionally biased region" description="Polar residues" evidence="3">
    <location>
        <begin position="143"/>
        <end position="154"/>
    </location>
</feature>
<feature type="compositionally biased region" description="Acidic residues" evidence="3">
    <location>
        <begin position="176"/>
        <end position="199"/>
    </location>
</feature>
<feature type="compositionally biased region" description="Gly residues" evidence="3">
    <location>
        <begin position="888"/>
        <end position="905"/>
    </location>
</feature>
<protein>
    <recommendedName>
        <fullName evidence="1">Eukaryotic translation initiation factor 3 subunit C</fullName>
        <shortName evidence="1">eIF3c</shortName>
    </recommendedName>
    <alternativeName>
        <fullName evidence="1">Eukaryotic translation initiation factor 3 subunit 8</fullName>
    </alternativeName>
    <alternativeName>
        <fullName evidence="1">eIF3 p110</fullName>
    </alternativeName>
</protein>
<proteinExistence type="evidence at transcript level"/>
<evidence type="ECO:0000255" key="1">
    <source>
        <dbReference type="HAMAP-Rule" id="MF_03002"/>
    </source>
</evidence>
<evidence type="ECO:0000255" key="2">
    <source>
        <dbReference type="PROSITE-ProRule" id="PRU01185"/>
    </source>
</evidence>
<evidence type="ECO:0000256" key="3">
    <source>
        <dbReference type="SAM" id="MobiDB-lite"/>
    </source>
</evidence>